<dbReference type="EC" id="2.2.1.9" evidence="1"/>
<dbReference type="EMBL" id="CP000469">
    <property type="protein sequence ID" value="ABK50183.1"/>
    <property type="molecule type" value="Genomic_DNA"/>
</dbReference>
<dbReference type="RefSeq" id="WP_011718684.1">
    <property type="nucleotide sequence ID" value="NC_008577.1"/>
</dbReference>
<dbReference type="SMR" id="A0L2B4"/>
<dbReference type="STRING" id="94122.Shewana3_3965"/>
<dbReference type="KEGG" id="shn:Shewana3_3965"/>
<dbReference type="eggNOG" id="COG1165">
    <property type="taxonomic scope" value="Bacteria"/>
</dbReference>
<dbReference type="HOGENOM" id="CLU_006051_3_0_6"/>
<dbReference type="OrthoDB" id="9791859at2"/>
<dbReference type="UniPathway" id="UPA00079"/>
<dbReference type="UniPathway" id="UPA01057">
    <property type="reaction ID" value="UER00164"/>
</dbReference>
<dbReference type="Proteomes" id="UP000002589">
    <property type="component" value="Chromosome"/>
</dbReference>
<dbReference type="GO" id="GO:0070204">
    <property type="term" value="F:2-succinyl-5-enolpyruvyl-6-hydroxy-3-cyclohexene-1-carboxylic-acid synthase activity"/>
    <property type="evidence" value="ECO:0007669"/>
    <property type="project" value="UniProtKB-UniRule"/>
</dbReference>
<dbReference type="GO" id="GO:0000287">
    <property type="term" value="F:magnesium ion binding"/>
    <property type="evidence" value="ECO:0007669"/>
    <property type="project" value="UniProtKB-UniRule"/>
</dbReference>
<dbReference type="GO" id="GO:0030145">
    <property type="term" value="F:manganese ion binding"/>
    <property type="evidence" value="ECO:0007669"/>
    <property type="project" value="UniProtKB-UniRule"/>
</dbReference>
<dbReference type="GO" id="GO:0030976">
    <property type="term" value="F:thiamine pyrophosphate binding"/>
    <property type="evidence" value="ECO:0007669"/>
    <property type="project" value="UniProtKB-UniRule"/>
</dbReference>
<dbReference type="GO" id="GO:0009234">
    <property type="term" value="P:menaquinone biosynthetic process"/>
    <property type="evidence" value="ECO:0007669"/>
    <property type="project" value="UniProtKB-UniRule"/>
</dbReference>
<dbReference type="CDD" id="cd07037">
    <property type="entry name" value="TPP_PYR_MenD"/>
    <property type="match status" value="1"/>
</dbReference>
<dbReference type="CDD" id="cd02009">
    <property type="entry name" value="TPP_SHCHC_synthase"/>
    <property type="match status" value="1"/>
</dbReference>
<dbReference type="Gene3D" id="3.40.50.970">
    <property type="match status" value="2"/>
</dbReference>
<dbReference type="Gene3D" id="3.40.50.1220">
    <property type="entry name" value="TPP-binding domain"/>
    <property type="match status" value="1"/>
</dbReference>
<dbReference type="HAMAP" id="MF_01659">
    <property type="entry name" value="MenD"/>
    <property type="match status" value="1"/>
</dbReference>
<dbReference type="InterPro" id="IPR029035">
    <property type="entry name" value="DHS-like_NAD/FAD-binding_dom"/>
</dbReference>
<dbReference type="InterPro" id="IPR004433">
    <property type="entry name" value="MenaQ_synth_MenD"/>
</dbReference>
<dbReference type="InterPro" id="IPR032264">
    <property type="entry name" value="MenD_middle"/>
</dbReference>
<dbReference type="InterPro" id="IPR029061">
    <property type="entry name" value="THDP-binding"/>
</dbReference>
<dbReference type="InterPro" id="IPR012001">
    <property type="entry name" value="Thiamin_PyroP_enz_TPP-bd_dom"/>
</dbReference>
<dbReference type="InterPro" id="IPR011766">
    <property type="entry name" value="TPP_enzyme_TPP-bd"/>
</dbReference>
<dbReference type="NCBIfam" id="TIGR00173">
    <property type="entry name" value="menD"/>
    <property type="match status" value="1"/>
</dbReference>
<dbReference type="PANTHER" id="PTHR42916">
    <property type="entry name" value="2-SUCCINYL-5-ENOLPYRUVYL-6-HYDROXY-3-CYCLOHEXENE-1-CARBOXYLATE SYNTHASE"/>
    <property type="match status" value="1"/>
</dbReference>
<dbReference type="PANTHER" id="PTHR42916:SF1">
    <property type="entry name" value="PROTEIN PHYLLO, CHLOROPLASTIC"/>
    <property type="match status" value="1"/>
</dbReference>
<dbReference type="Pfam" id="PF02775">
    <property type="entry name" value="TPP_enzyme_C"/>
    <property type="match status" value="1"/>
</dbReference>
<dbReference type="Pfam" id="PF16582">
    <property type="entry name" value="TPP_enzyme_M_2"/>
    <property type="match status" value="1"/>
</dbReference>
<dbReference type="Pfam" id="PF02776">
    <property type="entry name" value="TPP_enzyme_N"/>
    <property type="match status" value="1"/>
</dbReference>
<dbReference type="PIRSF" id="PIRSF004983">
    <property type="entry name" value="MenD"/>
    <property type="match status" value="1"/>
</dbReference>
<dbReference type="SUPFAM" id="SSF52467">
    <property type="entry name" value="DHS-like NAD/FAD-binding domain"/>
    <property type="match status" value="1"/>
</dbReference>
<dbReference type="SUPFAM" id="SSF52518">
    <property type="entry name" value="Thiamin diphosphate-binding fold (THDP-binding)"/>
    <property type="match status" value="2"/>
</dbReference>
<reference key="1">
    <citation type="submission" date="2006-09" db="EMBL/GenBank/DDBJ databases">
        <title>Complete sequence of chromosome 1 of Shewanella sp. ANA-3.</title>
        <authorList>
            <person name="Copeland A."/>
            <person name="Lucas S."/>
            <person name="Lapidus A."/>
            <person name="Barry K."/>
            <person name="Detter J.C."/>
            <person name="Glavina del Rio T."/>
            <person name="Hammon N."/>
            <person name="Israni S."/>
            <person name="Dalin E."/>
            <person name="Tice H."/>
            <person name="Pitluck S."/>
            <person name="Chertkov O."/>
            <person name="Brettin T."/>
            <person name="Bruce D."/>
            <person name="Han C."/>
            <person name="Tapia R."/>
            <person name="Gilna P."/>
            <person name="Schmutz J."/>
            <person name="Larimer F."/>
            <person name="Land M."/>
            <person name="Hauser L."/>
            <person name="Kyrpides N."/>
            <person name="Kim E."/>
            <person name="Newman D."/>
            <person name="Salticov C."/>
            <person name="Konstantinidis K."/>
            <person name="Klappenback J."/>
            <person name="Tiedje J."/>
            <person name="Richardson P."/>
        </authorList>
    </citation>
    <scope>NUCLEOTIDE SEQUENCE [LARGE SCALE GENOMIC DNA]</scope>
    <source>
        <strain>ANA-3</strain>
    </source>
</reference>
<evidence type="ECO:0000255" key="1">
    <source>
        <dbReference type="HAMAP-Rule" id="MF_01659"/>
    </source>
</evidence>
<proteinExistence type="inferred from homology"/>
<name>MEND_SHESA</name>
<protein>
    <recommendedName>
        <fullName evidence="1">2-succinyl-5-enolpyruvyl-6-hydroxy-3-cyclohexene-1-carboxylate synthase</fullName>
        <shortName evidence="1">SEPHCHC synthase</shortName>
        <ecNumber evidence="1">2.2.1.9</ecNumber>
    </recommendedName>
    <alternativeName>
        <fullName evidence="1">Menaquinone biosynthesis protein MenD</fullName>
    </alternativeName>
</protein>
<comment type="function">
    <text evidence="1">Catalyzes the thiamine diphosphate-dependent decarboxylation of 2-oxoglutarate and the subsequent addition of the resulting succinic semialdehyde-thiamine pyrophosphate anion to isochorismate to yield 2-succinyl-5-enolpyruvyl-6-hydroxy-3-cyclohexene-1-carboxylate (SEPHCHC).</text>
</comment>
<comment type="catalytic activity">
    <reaction evidence="1">
        <text>isochorismate + 2-oxoglutarate + H(+) = 5-enolpyruvoyl-6-hydroxy-2-succinyl-cyclohex-3-ene-1-carboxylate + CO2</text>
        <dbReference type="Rhea" id="RHEA:25593"/>
        <dbReference type="ChEBI" id="CHEBI:15378"/>
        <dbReference type="ChEBI" id="CHEBI:16526"/>
        <dbReference type="ChEBI" id="CHEBI:16810"/>
        <dbReference type="ChEBI" id="CHEBI:29780"/>
        <dbReference type="ChEBI" id="CHEBI:58818"/>
        <dbReference type="EC" id="2.2.1.9"/>
    </reaction>
</comment>
<comment type="cofactor">
    <cofactor evidence="1">
        <name>Mg(2+)</name>
        <dbReference type="ChEBI" id="CHEBI:18420"/>
    </cofactor>
    <cofactor evidence="1">
        <name>Mn(2+)</name>
        <dbReference type="ChEBI" id="CHEBI:29035"/>
    </cofactor>
</comment>
<comment type="cofactor">
    <cofactor evidence="1">
        <name>thiamine diphosphate</name>
        <dbReference type="ChEBI" id="CHEBI:58937"/>
    </cofactor>
    <text evidence="1">Binds 1 thiamine pyrophosphate per subunit.</text>
</comment>
<comment type="pathway">
    <text evidence="1">Quinol/quinone metabolism; 1,4-dihydroxy-2-naphthoate biosynthesis; 1,4-dihydroxy-2-naphthoate from chorismate: step 2/7.</text>
</comment>
<comment type="pathway">
    <text evidence="1">Quinol/quinone metabolism; menaquinone biosynthesis.</text>
</comment>
<comment type="subunit">
    <text evidence="1">Homodimer.</text>
</comment>
<comment type="similarity">
    <text evidence="1">Belongs to the TPP enzyme family. MenD subfamily.</text>
</comment>
<accession>A0L2B4</accession>
<sequence length="573" mass="63169">MRTENTATLNLMWGALILEELARLGVQHVCMAPGSRSTPLTLAAAQQTKLKRHLHFDERGLGFMALGLAKASCAPVAIITTSGTAVANLYPAIVEAWLTHVPLIVLSGDRPPELLGCGANQAIVQPAIFANYAQQVNLPTPDAHIAPQMLLTTLDEAVANQTRPVHINCMYREPLYPSEMSGTILDSESPYLRPLQTWLQHAKPYTQYGKSEQLSSPSDDAIMRFVHGKGVIIAGTLTPEQDPQQLIALSQKIGWPLLTDAQSQLRQHPAAIGNIDQLLQHPKARNLLQEADRVLVFGGRLLSKRLIAYLAEQNWHSYWQVLPQQDRLDPSHNAKHIWHANAAQFAQLNWYRSSSANWANTLVTYNDELHSLFVRNIDQGEFGEAQVIRAIANTRPLEQQLFIGNSLPVRLYDMYAPVSCCTATTYTNRGASGIDGLLATACGIAAHQGKPTSLIIGDLSQLHDLNSFAIARSLTSPLVIIILNNDGGNIFNLLPVPNEELRSDYYRLSHGLEFGYAAAMFNLPYNQVDNLADFQSCYHEALDYQGASVIEVSVSQHQASEQIAALNLWVKQS</sequence>
<gene>
    <name evidence="1" type="primary">menD</name>
    <name type="ordered locus">Shewana3_3965</name>
</gene>
<organism>
    <name type="scientific">Shewanella sp. (strain ANA-3)</name>
    <dbReference type="NCBI Taxonomy" id="94122"/>
    <lineage>
        <taxon>Bacteria</taxon>
        <taxon>Pseudomonadati</taxon>
        <taxon>Pseudomonadota</taxon>
        <taxon>Gammaproteobacteria</taxon>
        <taxon>Alteromonadales</taxon>
        <taxon>Shewanellaceae</taxon>
        <taxon>Shewanella</taxon>
    </lineage>
</organism>
<feature type="chain" id="PRO_0000341838" description="2-succinyl-5-enolpyruvyl-6-hydroxy-3-cyclohexene-1-carboxylate synthase">
    <location>
        <begin position="1"/>
        <end position="573"/>
    </location>
</feature>
<keyword id="KW-0460">Magnesium</keyword>
<keyword id="KW-0464">Manganese</keyword>
<keyword id="KW-0474">Menaquinone biosynthesis</keyword>
<keyword id="KW-0479">Metal-binding</keyword>
<keyword id="KW-0786">Thiamine pyrophosphate</keyword>
<keyword id="KW-0808">Transferase</keyword>